<proteinExistence type="inferred from homology"/>
<accession>B5E1Q0</accession>
<name>RL28_STRP4</name>
<keyword id="KW-0687">Ribonucleoprotein</keyword>
<keyword id="KW-0689">Ribosomal protein</keyword>
<protein>
    <recommendedName>
        <fullName evidence="1">Large ribosomal subunit protein bL28</fullName>
    </recommendedName>
    <alternativeName>
        <fullName evidence="2">50S ribosomal protein L28</fullName>
    </alternativeName>
</protein>
<feature type="chain" id="PRO_1000121694" description="Large ribosomal subunit protein bL28">
    <location>
        <begin position="1"/>
        <end position="62"/>
    </location>
</feature>
<evidence type="ECO:0000255" key="1">
    <source>
        <dbReference type="HAMAP-Rule" id="MF_00373"/>
    </source>
</evidence>
<evidence type="ECO:0000305" key="2"/>
<comment type="similarity">
    <text evidence="1">Belongs to the bacterial ribosomal protein bL28 family.</text>
</comment>
<gene>
    <name evidence="1" type="primary">rpmB</name>
    <name type="ordered locus">SPG_0403</name>
</gene>
<dbReference type="EMBL" id="CP001015">
    <property type="protein sequence ID" value="ACF54926.1"/>
    <property type="molecule type" value="Genomic_DNA"/>
</dbReference>
<dbReference type="SMR" id="B5E1Q0"/>
<dbReference type="KEGG" id="spx:SPG_0403"/>
<dbReference type="HOGENOM" id="CLU_064548_7_1_9"/>
<dbReference type="GO" id="GO:1990904">
    <property type="term" value="C:ribonucleoprotein complex"/>
    <property type="evidence" value="ECO:0007669"/>
    <property type="project" value="UniProtKB-KW"/>
</dbReference>
<dbReference type="GO" id="GO:0005840">
    <property type="term" value="C:ribosome"/>
    <property type="evidence" value="ECO:0007669"/>
    <property type="project" value="UniProtKB-KW"/>
</dbReference>
<dbReference type="GO" id="GO:0003735">
    <property type="term" value="F:structural constituent of ribosome"/>
    <property type="evidence" value="ECO:0007669"/>
    <property type="project" value="InterPro"/>
</dbReference>
<dbReference type="GO" id="GO:0006412">
    <property type="term" value="P:translation"/>
    <property type="evidence" value="ECO:0007669"/>
    <property type="project" value="UniProtKB-UniRule"/>
</dbReference>
<dbReference type="Gene3D" id="2.30.170.40">
    <property type="entry name" value="Ribosomal protein L28/L24"/>
    <property type="match status" value="1"/>
</dbReference>
<dbReference type="HAMAP" id="MF_00373">
    <property type="entry name" value="Ribosomal_bL28"/>
    <property type="match status" value="1"/>
</dbReference>
<dbReference type="InterPro" id="IPR050096">
    <property type="entry name" value="Bacterial_rp_bL28"/>
</dbReference>
<dbReference type="InterPro" id="IPR026569">
    <property type="entry name" value="Ribosomal_bL28"/>
</dbReference>
<dbReference type="InterPro" id="IPR034704">
    <property type="entry name" value="Ribosomal_bL28/bL31-like_sf"/>
</dbReference>
<dbReference type="InterPro" id="IPR001383">
    <property type="entry name" value="Ribosomal_bL28_bact-type"/>
</dbReference>
<dbReference type="InterPro" id="IPR037147">
    <property type="entry name" value="Ribosomal_bL28_sf"/>
</dbReference>
<dbReference type="NCBIfam" id="TIGR00009">
    <property type="entry name" value="L28"/>
    <property type="match status" value="1"/>
</dbReference>
<dbReference type="PANTHER" id="PTHR39080">
    <property type="entry name" value="50S RIBOSOMAL PROTEIN L28"/>
    <property type="match status" value="1"/>
</dbReference>
<dbReference type="PANTHER" id="PTHR39080:SF1">
    <property type="entry name" value="LARGE RIBOSOMAL SUBUNIT PROTEIN BL28A"/>
    <property type="match status" value="1"/>
</dbReference>
<dbReference type="Pfam" id="PF00830">
    <property type="entry name" value="Ribosomal_L28"/>
    <property type="match status" value="1"/>
</dbReference>
<dbReference type="SUPFAM" id="SSF143800">
    <property type="entry name" value="L28p-like"/>
    <property type="match status" value="1"/>
</dbReference>
<sequence>MAKVCYFTGRKTVSGNNRSHAMNQTKRAVKPNLQKVTVLIDGKPKKVWASARALKSGKVERV</sequence>
<reference key="1">
    <citation type="journal article" date="2001" name="Microb. Drug Resist.">
        <title>Annotated draft genomic sequence from a Streptococcus pneumoniae type 19F clinical isolate.</title>
        <authorList>
            <person name="Dopazo J."/>
            <person name="Mendoza A."/>
            <person name="Herrero J."/>
            <person name="Caldara F."/>
            <person name="Humbert Y."/>
            <person name="Friedli L."/>
            <person name="Guerrier M."/>
            <person name="Grand-Schenk E."/>
            <person name="Gandin C."/>
            <person name="de Francesco M."/>
            <person name="Polissi A."/>
            <person name="Buell G."/>
            <person name="Feger G."/>
            <person name="Garcia E."/>
            <person name="Peitsch M."/>
            <person name="Garcia-Bustos J.F."/>
        </authorList>
    </citation>
    <scope>NUCLEOTIDE SEQUENCE [LARGE SCALE GENOMIC DNA]</scope>
    <source>
        <strain>G54</strain>
    </source>
</reference>
<reference key="2">
    <citation type="submission" date="2008-03" db="EMBL/GenBank/DDBJ databases">
        <title>Pneumococcal beta glucoside metabolism investigated by whole genome comparison.</title>
        <authorList>
            <person name="Mulas L."/>
            <person name="Trappetti C."/>
            <person name="Hakenbeck R."/>
            <person name="Iannelli F."/>
            <person name="Pozzi G."/>
            <person name="Davidsen T.M."/>
            <person name="Tettelin H."/>
            <person name="Oggioni M."/>
        </authorList>
    </citation>
    <scope>NUCLEOTIDE SEQUENCE [LARGE SCALE GENOMIC DNA]</scope>
    <source>
        <strain>G54</strain>
    </source>
</reference>
<organism>
    <name type="scientific">Streptococcus pneumoniae serotype 19F (strain G54)</name>
    <dbReference type="NCBI Taxonomy" id="512566"/>
    <lineage>
        <taxon>Bacteria</taxon>
        <taxon>Bacillati</taxon>
        <taxon>Bacillota</taxon>
        <taxon>Bacilli</taxon>
        <taxon>Lactobacillales</taxon>
        <taxon>Streptococcaceae</taxon>
        <taxon>Streptococcus</taxon>
    </lineage>
</organism>